<comment type="function">
    <text evidence="1">Transfers the 4'-phosphopantetheine moiety from coenzyme A to a Ser of acyl-carrier-protein.</text>
</comment>
<comment type="catalytic activity">
    <reaction evidence="1">
        <text>apo-[ACP] + CoA = holo-[ACP] + adenosine 3',5'-bisphosphate + H(+)</text>
        <dbReference type="Rhea" id="RHEA:12068"/>
        <dbReference type="Rhea" id="RHEA-COMP:9685"/>
        <dbReference type="Rhea" id="RHEA-COMP:9690"/>
        <dbReference type="ChEBI" id="CHEBI:15378"/>
        <dbReference type="ChEBI" id="CHEBI:29999"/>
        <dbReference type="ChEBI" id="CHEBI:57287"/>
        <dbReference type="ChEBI" id="CHEBI:58343"/>
        <dbReference type="ChEBI" id="CHEBI:64479"/>
        <dbReference type="EC" id="2.7.8.7"/>
    </reaction>
</comment>
<comment type="cofactor">
    <cofactor evidence="1">
        <name>Mg(2+)</name>
        <dbReference type="ChEBI" id="CHEBI:18420"/>
    </cofactor>
</comment>
<comment type="subcellular location">
    <subcellularLocation>
        <location evidence="1">Cytoplasm</location>
    </subcellularLocation>
</comment>
<comment type="similarity">
    <text evidence="1">Belongs to the P-Pant transferase superfamily. AcpS family.</text>
</comment>
<keyword id="KW-0963">Cytoplasm</keyword>
<keyword id="KW-0275">Fatty acid biosynthesis</keyword>
<keyword id="KW-0276">Fatty acid metabolism</keyword>
<keyword id="KW-0444">Lipid biosynthesis</keyword>
<keyword id="KW-0443">Lipid metabolism</keyword>
<keyword id="KW-0460">Magnesium</keyword>
<keyword id="KW-0479">Metal-binding</keyword>
<keyword id="KW-0808">Transferase</keyword>
<evidence type="ECO:0000255" key="1">
    <source>
        <dbReference type="HAMAP-Rule" id="MF_00101"/>
    </source>
</evidence>
<protein>
    <recommendedName>
        <fullName evidence="1">Holo-[acyl-carrier-protein] synthase</fullName>
        <shortName evidence="1">Holo-ACP synthase</shortName>
        <ecNumber evidence="1">2.7.8.7</ecNumber>
    </recommendedName>
    <alternativeName>
        <fullName evidence="1">4'-phosphopantetheinyl transferase AcpS</fullName>
    </alternativeName>
</protein>
<organism>
    <name type="scientific">Cereibacter sphaeroides (strain ATCC 17025 / ATH 2.4.3)</name>
    <name type="common">Rhodobacter sphaeroides</name>
    <dbReference type="NCBI Taxonomy" id="349102"/>
    <lineage>
        <taxon>Bacteria</taxon>
        <taxon>Pseudomonadati</taxon>
        <taxon>Pseudomonadota</taxon>
        <taxon>Alphaproteobacteria</taxon>
        <taxon>Rhodobacterales</taxon>
        <taxon>Paracoccaceae</taxon>
        <taxon>Cereibacter</taxon>
    </lineage>
</organism>
<proteinExistence type="inferred from homology"/>
<accession>A4WVP7</accession>
<reference key="1">
    <citation type="submission" date="2007-04" db="EMBL/GenBank/DDBJ databases">
        <title>Complete sequence of chromosome of Rhodobacter sphaeroides ATCC 17025.</title>
        <authorList>
            <consortium name="US DOE Joint Genome Institute"/>
            <person name="Copeland A."/>
            <person name="Lucas S."/>
            <person name="Lapidus A."/>
            <person name="Barry K."/>
            <person name="Detter J.C."/>
            <person name="Glavina del Rio T."/>
            <person name="Hammon N."/>
            <person name="Israni S."/>
            <person name="Dalin E."/>
            <person name="Tice H."/>
            <person name="Pitluck S."/>
            <person name="Chertkov O."/>
            <person name="Brettin T."/>
            <person name="Bruce D."/>
            <person name="Han C."/>
            <person name="Schmutz J."/>
            <person name="Larimer F."/>
            <person name="Land M."/>
            <person name="Hauser L."/>
            <person name="Kyrpides N."/>
            <person name="Kim E."/>
            <person name="Richardson P."/>
            <person name="Mackenzie C."/>
            <person name="Choudhary M."/>
            <person name="Donohue T.J."/>
            <person name="Kaplan S."/>
        </authorList>
    </citation>
    <scope>NUCLEOTIDE SEQUENCE [LARGE SCALE GENOMIC DNA]</scope>
    <source>
        <strain>ATCC 17025 / ATH 2.4.3</strain>
    </source>
</reference>
<dbReference type="EC" id="2.7.8.7" evidence="1"/>
<dbReference type="EMBL" id="CP000661">
    <property type="protein sequence ID" value="ABP71461.1"/>
    <property type="molecule type" value="Genomic_DNA"/>
</dbReference>
<dbReference type="SMR" id="A4WVP7"/>
<dbReference type="STRING" id="349102.Rsph17025_2573"/>
<dbReference type="KEGG" id="rsq:Rsph17025_2573"/>
<dbReference type="eggNOG" id="COG0736">
    <property type="taxonomic scope" value="Bacteria"/>
</dbReference>
<dbReference type="HOGENOM" id="CLU_089696_0_2_5"/>
<dbReference type="BioCyc" id="RSPH349102:G1G8M-2652-MONOMER"/>
<dbReference type="GO" id="GO:0005737">
    <property type="term" value="C:cytoplasm"/>
    <property type="evidence" value="ECO:0007669"/>
    <property type="project" value="UniProtKB-SubCell"/>
</dbReference>
<dbReference type="GO" id="GO:0008897">
    <property type="term" value="F:holo-[acyl-carrier-protein] synthase activity"/>
    <property type="evidence" value="ECO:0007669"/>
    <property type="project" value="UniProtKB-UniRule"/>
</dbReference>
<dbReference type="GO" id="GO:0000287">
    <property type="term" value="F:magnesium ion binding"/>
    <property type="evidence" value="ECO:0007669"/>
    <property type="project" value="UniProtKB-UniRule"/>
</dbReference>
<dbReference type="GO" id="GO:0006633">
    <property type="term" value="P:fatty acid biosynthetic process"/>
    <property type="evidence" value="ECO:0007669"/>
    <property type="project" value="UniProtKB-UniRule"/>
</dbReference>
<dbReference type="Gene3D" id="3.90.470.20">
    <property type="entry name" value="4'-phosphopantetheinyl transferase domain"/>
    <property type="match status" value="1"/>
</dbReference>
<dbReference type="HAMAP" id="MF_00101">
    <property type="entry name" value="AcpS"/>
    <property type="match status" value="1"/>
</dbReference>
<dbReference type="InterPro" id="IPR008278">
    <property type="entry name" value="4-PPantetheinyl_Trfase_dom"/>
</dbReference>
<dbReference type="InterPro" id="IPR037143">
    <property type="entry name" value="4-PPantetheinyl_Trfase_dom_sf"/>
</dbReference>
<dbReference type="InterPro" id="IPR002582">
    <property type="entry name" value="ACPS"/>
</dbReference>
<dbReference type="InterPro" id="IPR004568">
    <property type="entry name" value="Ppantetheine-prot_Trfase_dom"/>
</dbReference>
<dbReference type="NCBIfam" id="TIGR00516">
    <property type="entry name" value="acpS"/>
    <property type="match status" value="1"/>
</dbReference>
<dbReference type="NCBIfam" id="TIGR00556">
    <property type="entry name" value="pantethn_trn"/>
    <property type="match status" value="1"/>
</dbReference>
<dbReference type="Pfam" id="PF01648">
    <property type="entry name" value="ACPS"/>
    <property type="match status" value="1"/>
</dbReference>
<dbReference type="SUPFAM" id="SSF56214">
    <property type="entry name" value="4'-phosphopantetheinyl transferase"/>
    <property type="match status" value="1"/>
</dbReference>
<feature type="chain" id="PRO_1000008482" description="Holo-[acyl-carrier-protein] synthase">
    <location>
        <begin position="1"/>
        <end position="137"/>
    </location>
</feature>
<feature type="binding site" evidence="1">
    <location>
        <position position="8"/>
    </location>
    <ligand>
        <name>Mg(2+)</name>
        <dbReference type="ChEBI" id="CHEBI:18420"/>
    </ligand>
</feature>
<feature type="binding site" evidence="1">
    <location>
        <position position="57"/>
    </location>
    <ligand>
        <name>Mg(2+)</name>
        <dbReference type="ChEBI" id="CHEBI:18420"/>
    </ligand>
</feature>
<name>ACPS_CERS5</name>
<gene>
    <name evidence="1" type="primary">acpS</name>
    <name type="ordered locus">Rsph17025_2573</name>
</gene>
<sequence>MILGIGTDLANIERVEKTLARFGDRFRNRVFTPLEQARAERRADVAGTYAKRWAAKEACSKALGTGLRMGIAWKDMSVANLVTGQPVMELTGWAAERLAAMTPPGHEAIVHVSLTDDHPWAQAFVVIEARPLAAPPA</sequence>